<dbReference type="EMBL" id="CP000969">
    <property type="protein sequence ID" value="ACB08524.1"/>
    <property type="molecule type" value="Genomic_DNA"/>
</dbReference>
<dbReference type="RefSeq" id="WP_011942855.1">
    <property type="nucleotide sequence ID" value="NC_010483.1"/>
</dbReference>
<dbReference type="SMR" id="B1L7U3"/>
<dbReference type="KEGG" id="trq:TRQ2_0163"/>
<dbReference type="HOGENOM" id="CLU_117144_1_2_0"/>
<dbReference type="Proteomes" id="UP000001687">
    <property type="component" value="Chromosome"/>
</dbReference>
<dbReference type="Gene3D" id="3.30.110.70">
    <property type="entry name" value="Hypothetical protein apc22750. Chain B"/>
    <property type="match status" value="1"/>
</dbReference>
<dbReference type="HAMAP" id="MF_00338">
    <property type="entry name" value="UPF0145"/>
    <property type="match status" value="1"/>
</dbReference>
<dbReference type="InterPro" id="IPR035439">
    <property type="entry name" value="UPF0145_dom_sf"/>
</dbReference>
<dbReference type="InterPro" id="IPR002765">
    <property type="entry name" value="UPF0145_YbjQ-like"/>
</dbReference>
<dbReference type="PANTHER" id="PTHR34068:SF2">
    <property type="entry name" value="UPF0145 PROTEIN SCO3412"/>
    <property type="match status" value="1"/>
</dbReference>
<dbReference type="PANTHER" id="PTHR34068">
    <property type="entry name" value="UPF0145 PROTEIN YBJQ"/>
    <property type="match status" value="1"/>
</dbReference>
<dbReference type="Pfam" id="PF01906">
    <property type="entry name" value="YbjQ_1"/>
    <property type="match status" value="1"/>
</dbReference>
<dbReference type="SUPFAM" id="SSF117782">
    <property type="entry name" value="YbjQ-like"/>
    <property type="match status" value="1"/>
</dbReference>
<feature type="chain" id="PRO_1000120021" description="UPF0145 protein TRQ2_0163">
    <location>
        <begin position="1"/>
        <end position="106"/>
    </location>
</feature>
<evidence type="ECO:0000255" key="1">
    <source>
        <dbReference type="HAMAP-Rule" id="MF_00338"/>
    </source>
</evidence>
<gene>
    <name type="ordered locus">TRQ2_0163</name>
</gene>
<protein>
    <recommendedName>
        <fullName evidence="1">UPF0145 protein TRQ2_0163</fullName>
    </recommendedName>
</protein>
<comment type="similarity">
    <text evidence="1">Belongs to the UPF0145 family.</text>
</comment>
<proteinExistence type="inferred from homology"/>
<sequence>MIITTTEQVPGYRVKEILGVVCGNVVMSKHLGKDIAAAFKTLAGGEIKGYTEMLTEARNIALERMIKEAEKLGADAVIGFRYSSSTIMSGAAEILAYGTAVKLEKI</sequence>
<name>Y163_THESQ</name>
<organism>
    <name type="scientific">Thermotoga sp. (strain RQ2)</name>
    <dbReference type="NCBI Taxonomy" id="126740"/>
    <lineage>
        <taxon>Bacteria</taxon>
        <taxon>Thermotogati</taxon>
        <taxon>Thermotogota</taxon>
        <taxon>Thermotogae</taxon>
        <taxon>Thermotogales</taxon>
        <taxon>Thermotogaceae</taxon>
        <taxon>Thermotoga</taxon>
    </lineage>
</organism>
<reference key="1">
    <citation type="journal article" date="2011" name="J. Bacteriol.">
        <title>Genome sequence of Thermotoga sp. strain RQ2, a hyperthermophilic bacterium isolated from a geothermally heated region of the seafloor near Ribeira Quente, the Azores.</title>
        <authorList>
            <person name="Swithers K.S."/>
            <person name="DiPippo J.L."/>
            <person name="Bruce D.C."/>
            <person name="Detter C."/>
            <person name="Tapia R."/>
            <person name="Han S."/>
            <person name="Saunders E."/>
            <person name="Goodwin L.A."/>
            <person name="Han J."/>
            <person name="Woyke T."/>
            <person name="Pitluck S."/>
            <person name="Pennacchio L."/>
            <person name="Nolan M."/>
            <person name="Mikhailova N."/>
            <person name="Lykidis A."/>
            <person name="Land M.L."/>
            <person name="Brettin T."/>
            <person name="Stetter K.O."/>
            <person name="Nelson K.E."/>
            <person name="Gogarten J.P."/>
            <person name="Noll K.M."/>
        </authorList>
    </citation>
    <scope>NUCLEOTIDE SEQUENCE [LARGE SCALE GENOMIC DNA]</scope>
    <source>
        <strain>RQ2</strain>
    </source>
</reference>
<accession>B1L7U3</accession>